<name>AB3G_ARATH</name>
<accession>Q9ZUU9</accession>
<comment type="subcellular location">
    <subcellularLocation>
        <location evidence="1">Membrane</location>
        <topology evidence="1">Multi-pass membrane protein</topology>
    </subcellularLocation>
</comment>
<comment type="similarity">
    <text evidence="5">Belongs to the ABC transporter superfamily. ABCG family. Eye pigment precursor importer (TC 3.A.1.204) subfamily.</text>
</comment>
<comment type="sequence caution" evidence="5">
    <conflict type="erroneous gene model prediction">
        <sequence resource="EMBL-CDS" id="AAC98459"/>
    </conflict>
</comment>
<comment type="sequence caution" evidence="5">
    <conflict type="erroneous gene model prediction">
        <sequence resource="EMBL-CDS" id="AAM15328"/>
    </conflict>
</comment>
<keyword id="KW-0067">ATP-binding</keyword>
<keyword id="KW-0472">Membrane</keyword>
<keyword id="KW-0547">Nucleotide-binding</keyword>
<keyword id="KW-0597">Phosphoprotein</keyword>
<keyword id="KW-1185">Reference proteome</keyword>
<keyword id="KW-0812">Transmembrane</keyword>
<keyword id="KW-1133">Transmembrane helix</keyword>
<keyword id="KW-0813">Transport</keyword>
<evidence type="ECO:0000250" key="1"/>
<evidence type="ECO:0000255" key="2"/>
<evidence type="ECO:0000255" key="3">
    <source>
        <dbReference type="PROSITE-ProRule" id="PRU00434"/>
    </source>
</evidence>
<evidence type="ECO:0000256" key="4">
    <source>
        <dbReference type="SAM" id="MobiDB-lite"/>
    </source>
</evidence>
<evidence type="ECO:0000305" key="5"/>
<evidence type="ECO:0007744" key="6">
    <source>
    </source>
</evidence>
<evidence type="ECO:0007744" key="7">
    <source>
    </source>
</evidence>
<dbReference type="EMBL" id="AC005851">
    <property type="protein sequence ID" value="AAC98459.1"/>
    <property type="status" value="ALT_SEQ"/>
    <property type="molecule type" value="Genomic_DNA"/>
</dbReference>
<dbReference type="EMBL" id="AC006929">
    <property type="protein sequence ID" value="AAM15328.1"/>
    <property type="status" value="ALT_SEQ"/>
    <property type="molecule type" value="Genomic_DNA"/>
</dbReference>
<dbReference type="EMBL" id="CP002685">
    <property type="protein sequence ID" value="AEC08075.1"/>
    <property type="molecule type" value="Genomic_DNA"/>
</dbReference>
<dbReference type="EMBL" id="CP002685">
    <property type="protein sequence ID" value="ANM62504.1"/>
    <property type="molecule type" value="Genomic_DNA"/>
</dbReference>
<dbReference type="PIR" id="D84680">
    <property type="entry name" value="D84680"/>
</dbReference>
<dbReference type="RefSeq" id="NP_001318302.1">
    <property type="nucleotide sequence ID" value="NM_001336143.1"/>
</dbReference>
<dbReference type="RefSeq" id="NP_850111.1">
    <property type="nucleotide sequence ID" value="NM_179780.1"/>
</dbReference>
<dbReference type="SMR" id="Q9ZUU9"/>
<dbReference type="BioGRID" id="2701">
    <property type="interactions" value="5"/>
</dbReference>
<dbReference type="FunCoup" id="Q9ZUU9">
    <property type="interactions" value="395"/>
</dbReference>
<dbReference type="STRING" id="3702.Q9ZUU9"/>
<dbReference type="TCDB" id="3.A.1.204.19">
    <property type="family name" value="the atp-binding cassette (abc) superfamily"/>
</dbReference>
<dbReference type="iPTMnet" id="Q9ZUU9"/>
<dbReference type="PaxDb" id="3702-AT2G28070.1"/>
<dbReference type="ProteomicsDB" id="244537"/>
<dbReference type="EnsemblPlants" id="AT2G28070.1">
    <property type="protein sequence ID" value="AT2G28070.1"/>
    <property type="gene ID" value="AT2G28070"/>
</dbReference>
<dbReference type="EnsemblPlants" id="AT2G28070.2">
    <property type="protein sequence ID" value="AT2G28070.2"/>
    <property type="gene ID" value="AT2G28070"/>
</dbReference>
<dbReference type="GeneID" id="817351"/>
<dbReference type="Gramene" id="AT2G28070.1">
    <property type="protein sequence ID" value="AT2G28070.1"/>
    <property type="gene ID" value="AT2G28070"/>
</dbReference>
<dbReference type="Gramene" id="AT2G28070.2">
    <property type="protein sequence ID" value="AT2G28070.2"/>
    <property type="gene ID" value="AT2G28070"/>
</dbReference>
<dbReference type="KEGG" id="ath:AT2G28070"/>
<dbReference type="Araport" id="AT2G28070"/>
<dbReference type="TAIR" id="AT2G28070">
    <property type="gene designation" value="ABCG3"/>
</dbReference>
<dbReference type="eggNOG" id="KOG0061">
    <property type="taxonomic scope" value="Eukaryota"/>
</dbReference>
<dbReference type="HOGENOM" id="CLU_000604_57_7_1"/>
<dbReference type="InParanoid" id="Q9ZUU9"/>
<dbReference type="OMA" id="FKCNRDT"/>
<dbReference type="OrthoDB" id="66620at2759"/>
<dbReference type="PRO" id="PR:Q9ZUU9"/>
<dbReference type="Proteomes" id="UP000006548">
    <property type="component" value="Chromosome 2"/>
</dbReference>
<dbReference type="ExpressionAtlas" id="Q9ZUU9">
    <property type="expression patterns" value="baseline and differential"/>
</dbReference>
<dbReference type="GO" id="GO:0005886">
    <property type="term" value="C:plasma membrane"/>
    <property type="evidence" value="ECO:0007005"/>
    <property type="project" value="TAIR"/>
</dbReference>
<dbReference type="GO" id="GO:0140359">
    <property type="term" value="F:ABC-type transporter activity"/>
    <property type="evidence" value="ECO:0007669"/>
    <property type="project" value="InterPro"/>
</dbReference>
<dbReference type="GO" id="GO:0005524">
    <property type="term" value="F:ATP binding"/>
    <property type="evidence" value="ECO:0007669"/>
    <property type="project" value="UniProtKB-KW"/>
</dbReference>
<dbReference type="GO" id="GO:0016887">
    <property type="term" value="F:ATP hydrolysis activity"/>
    <property type="evidence" value="ECO:0007669"/>
    <property type="project" value="InterPro"/>
</dbReference>
<dbReference type="CDD" id="cd03213">
    <property type="entry name" value="ABCG_EPDR"/>
    <property type="match status" value="1"/>
</dbReference>
<dbReference type="FunFam" id="3.40.50.300:FF:000932">
    <property type="entry name" value="ABC transporter G family member 3"/>
    <property type="match status" value="1"/>
</dbReference>
<dbReference type="Gene3D" id="3.40.50.300">
    <property type="entry name" value="P-loop containing nucleotide triphosphate hydrolases"/>
    <property type="match status" value="1"/>
</dbReference>
<dbReference type="InterPro" id="IPR003593">
    <property type="entry name" value="AAA+_ATPase"/>
</dbReference>
<dbReference type="InterPro" id="IPR013525">
    <property type="entry name" value="ABC2_TM"/>
</dbReference>
<dbReference type="InterPro" id="IPR003439">
    <property type="entry name" value="ABC_transporter-like_ATP-bd"/>
</dbReference>
<dbReference type="InterPro" id="IPR027417">
    <property type="entry name" value="P-loop_NTPase"/>
</dbReference>
<dbReference type="InterPro" id="IPR052215">
    <property type="entry name" value="Plant_ABCG"/>
</dbReference>
<dbReference type="PANTHER" id="PTHR48042">
    <property type="entry name" value="ABC TRANSPORTER G FAMILY MEMBER 11"/>
    <property type="match status" value="1"/>
</dbReference>
<dbReference type="PANTHER" id="PTHR48042:SF12">
    <property type="entry name" value="ABC TRANSPORTER G FAMILY MEMBER 3"/>
    <property type="match status" value="1"/>
</dbReference>
<dbReference type="Pfam" id="PF01061">
    <property type="entry name" value="ABC2_membrane"/>
    <property type="match status" value="1"/>
</dbReference>
<dbReference type="Pfam" id="PF00005">
    <property type="entry name" value="ABC_tran"/>
    <property type="match status" value="1"/>
</dbReference>
<dbReference type="SMART" id="SM00382">
    <property type="entry name" value="AAA"/>
    <property type="match status" value="1"/>
</dbReference>
<dbReference type="SUPFAM" id="SSF52540">
    <property type="entry name" value="P-loop containing nucleoside triphosphate hydrolases"/>
    <property type="match status" value="1"/>
</dbReference>
<dbReference type="PROSITE" id="PS50893">
    <property type="entry name" value="ABC_TRANSPORTER_2"/>
    <property type="match status" value="1"/>
</dbReference>
<proteinExistence type="evidence at protein level"/>
<protein>
    <recommendedName>
        <fullName>ABC transporter G family member 3</fullName>
        <shortName>ABC transporter ABCG.3</shortName>
        <shortName>AtABCG3</shortName>
    </recommendedName>
    <alternativeName>
        <fullName>White-brown complex homolog protein 3</fullName>
        <shortName>AtWBC3</shortName>
    </alternativeName>
</protein>
<organism>
    <name type="scientific">Arabidopsis thaliana</name>
    <name type="common">Mouse-ear cress</name>
    <dbReference type="NCBI Taxonomy" id="3702"/>
    <lineage>
        <taxon>Eukaryota</taxon>
        <taxon>Viridiplantae</taxon>
        <taxon>Streptophyta</taxon>
        <taxon>Embryophyta</taxon>
        <taxon>Tracheophyta</taxon>
        <taxon>Spermatophyta</taxon>
        <taxon>Magnoliopsida</taxon>
        <taxon>eudicotyledons</taxon>
        <taxon>Gunneridae</taxon>
        <taxon>Pentapetalae</taxon>
        <taxon>rosids</taxon>
        <taxon>malvids</taxon>
        <taxon>Brassicales</taxon>
        <taxon>Brassicaceae</taxon>
        <taxon>Camelineae</taxon>
        <taxon>Arabidopsis</taxon>
    </lineage>
</organism>
<sequence>MEEIQSQSDLYRSSSSSASSPTSRVPSSHFFYVRKPGSLRQPISFEDSPEWEDTPDVDLRMEDEAGGGDSINDATTTPVSPSLSKMNSGSMASPPVPEGGAGTGVVRKIAGASIAWKDLTVTMKGKRKYSDKVVKSSNGYAFPGTMTVIMGPAKSGKSTLLRALAGRLPPSAKMYGEVFVNGSKSHMPYGSYGFVERETQLIGSLTVREFLYYSALLQLPGFLFQKRSVVEDAIQAMSLSDYANKLIGGHCYMKGLRSGERRRVSIARELVMRPHILFIDEPLYHLDSVSALLMMVTLKKLASMGCTLVFTIYQSSTEVFGLFDRICLLSNGNTLFFGETLACLQHFSNAGFPCPIMQSPSDHFLRAINTDFDRIIAMCKNWQDDNGDFSAVNMDTAVAIRTLEATYKSSADADSVEAMIIKLTEREGTQLKSKGKAGAATRVAVLTWRSLLVMSREWKYYWLRLILYMILTLSIGTLYSGLGHSLSSVATRVAAVFVFVSFASLLGIAGIPSLLKEIKIYRSEASNQHSGAFVFLLGQFLGSIPFLFLMSISSSLVFYFMVGLRDDFSLLMYFVLNFFMCLLVNEGLMLFIACIWRDVYWSTLTLISVHVIMMLAAGHFRIRTALPKPVWTYPFAYISFHTYSIEGLLENEYLGEVFAVGEVRSISGYQAIQGNYQISPDTNAKWRNMLVLLAMAFGYRLLVYVLLRFGLNKNVSGRLLLSHKKNNSSR</sequence>
<feature type="chain" id="PRO_0000240675" description="ABC transporter G family member 3">
    <location>
        <begin position="1"/>
        <end position="730"/>
    </location>
</feature>
<feature type="transmembrane region" description="Helical" evidence="2">
    <location>
        <begin position="465"/>
        <end position="485"/>
    </location>
</feature>
<feature type="transmembrane region" description="Helical" evidence="2">
    <location>
        <begin position="495"/>
        <end position="515"/>
    </location>
</feature>
<feature type="transmembrane region" description="Helical" evidence="2">
    <location>
        <begin position="532"/>
        <end position="552"/>
    </location>
</feature>
<feature type="transmembrane region" description="Helical" evidence="2">
    <location>
        <begin position="575"/>
        <end position="595"/>
    </location>
</feature>
<feature type="transmembrane region" description="Helical" evidence="2">
    <location>
        <begin position="600"/>
        <end position="620"/>
    </location>
</feature>
<feature type="transmembrane region" description="Helical" evidence="2">
    <location>
        <begin position="689"/>
        <end position="709"/>
    </location>
</feature>
<feature type="domain" description="ABC transporter" evidence="3">
    <location>
        <begin position="114"/>
        <end position="356"/>
    </location>
</feature>
<feature type="domain" description="ABC transmembrane type-2">
    <location>
        <begin position="441"/>
        <end position="653"/>
    </location>
</feature>
<feature type="region of interest" description="Disordered" evidence="4">
    <location>
        <begin position="1"/>
        <end position="100"/>
    </location>
</feature>
<feature type="compositionally biased region" description="Low complexity" evidence="4">
    <location>
        <begin position="1"/>
        <end position="28"/>
    </location>
</feature>
<feature type="compositionally biased region" description="Acidic residues" evidence="4">
    <location>
        <begin position="47"/>
        <end position="56"/>
    </location>
</feature>
<feature type="compositionally biased region" description="Polar residues" evidence="4">
    <location>
        <begin position="72"/>
        <end position="91"/>
    </location>
</feature>
<feature type="binding site" evidence="3">
    <location>
        <begin position="151"/>
        <end position="158"/>
    </location>
    <ligand>
        <name>ATP</name>
        <dbReference type="ChEBI" id="CHEBI:30616"/>
    </ligand>
</feature>
<feature type="modified residue" description="Phosphoserine" evidence="6 7">
    <location>
        <position position="93"/>
    </location>
</feature>
<gene>
    <name type="primary">ABCG3</name>
    <name type="synonym">WBC3</name>
    <name type="ordered locus">At2g28070</name>
    <name type="ORF">F24D13.14</name>
</gene>
<reference key="1">
    <citation type="journal article" date="1999" name="Nature">
        <title>Sequence and analysis of chromosome 2 of the plant Arabidopsis thaliana.</title>
        <authorList>
            <person name="Lin X."/>
            <person name="Kaul S."/>
            <person name="Rounsley S.D."/>
            <person name="Shea T.P."/>
            <person name="Benito M.-I."/>
            <person name="Town C.D."/>
            <person name="Fujii C.Y."/>
            <person name="Mason T.M."/>
            <person name="Bowman C.L."/>
            <person name="Barnstead M.E."/>
            <person name="Feldblyum T.V."/>
            <person name="Buell C.R."/>
            <person name="Ketchum K.A."/>
            <person name="Lee J.J."/>
            <person name="Ronning C.M."/>
            <person name="Koo H.L."/>
            <person name="Moffat K.S."/>
            <person name="Cronin L.A."/>
            <person name="Shen M."/>
            <person name="Pai G."/>
            <person name="Van Aken S."/>
            <person name="Umayam L."/>
            <person name="Tallon L.J."/>
            <person name="Gill J.E."/>
            <person name="Adams M.D."/>
            <person name="Carrera A.J."/>
            <person name="Creasy T.H."/>
            <person name="Goodman H.M."/>
            <person name="Somerville C.R."/>
            <person name="Copenhaver G.P."/>
            <person name="Preuss D."/>
            <person name="Nierman W.C."/>
            <person name="White O."/>
            <person name="Eisen J.A."/>
            <person name="Salzberg S.L."/>
            <person name="Fraser C.M."/>
            <person name="Venter J.C."/>
        </authorList>
    </citation>
    <scope>NUCLEOTIDE SEQUENCE [LARGE SCALE GENOMIC DNA]</scope>
    <source>
        <strain>cv. Columbia</strain>
    </source>
</reference>
<reference key="2">
    <citation type="journal article" date="2017" name="Plant J.">
        <title>Araport11: a complete reannotation of the Arabidopsis thaliana reference genome.</title>
        <authorList>
            <person name="Cheng C.Y."/>
            <person name="Krishnakumar V."/>
            <person name="Chan A.P."/>
            <person name="Thibaud-Nissen F."/>
            <person name="Schobel S."/>
            <person name="Town C.D."/>
        </authorList>
    </citation>
    <scope>GENOME REANNOTATION</scope>
    <source>
        <strain>cv. Columbia</strain>
    </source>
</reference>
<reference key="3">
    <citation type="journal article" date="2001" name="J. Biol. Chem.">
        <title>The Arabidopsis thaliana ABC protein superfamily, a complete inventory.</title>
        <authorList>
            <person name="Sanchez-Fernandez R."/>
            <person name="Davies T.G."/>
            <person name="Coleman J.O."/>
            <person name="Rea P.A."/>
        </authorList>
    </citation>
    <scope>GENE FAMILY</scope>
    <scope>NOMENCLATURE</scope>
</reference>
<reference key="4">
    <citation type="journal article" date="2003" name="Mol. Cell. Proteomics">
        <title>Large-scale analysis of in vivo phosphorylated membrane proteins by immobilized metal ion affinity chromatography and mass spectrometry.</title>
        <authorList>
            <person name="Nuehse T.S."/>
            <person name="Stensballe A."/>
            <person name="Jensen O.N."/>
            <person name="Peck S.C."/>
        </authorList>
    </citation>
    <scope>PHOSPHORYLATION [LARGE SCALE ANALYSIS] AT SER-93</scope>
    <scope>IDENTIFICATION BY MASS SPECTROMETRY [LARGE SCALE ANALYSIS]</scope>
    <source>
        <strain>cv. La-0</strain>
    </source>
</reference>
<reference key="5">
    <citation type="journal article" date="2004" name="Plant Cell">
        <title>Phosphoproteomics of the Arabidopsis plasma membrane and a new phosphorylation site database.</title>
        <authorList>
            <person name="Nuehse T.S."/>
            <person name="Stensballe A."/>
            <person name="Jensen O.N."/>
            <person name="Peck S.C."/>
        </authorList>
    </citation>
    <scope>PHOSPHORYLATION [LARGE SCALE ANALYSIS] AT SER-93</scope>
    <scope>IDENTIFICATION BY MASS SPECTROMETRY [LARGE SCALE ANALYSIS]</scope>
</reference>
<reference key="6">
    <citation type="journal article" date="2008" name="Trends Plant Sci.">
        <title>Plant ABC proteins - a unified nomenclature and updated inventory.</title>
        <authorList>
            <person name="Verrier P.J."/>
            <person name="Bird D."/>
            <person name="Burla B."/>
            <person name="Dassa E."/>
            <person name="Forestier C."/>
            <person name="Geisler M."/>
            <person name="Klein M."/>
            <person name="Kolukisaoglu H.U."/>
            <person name="Lee Y."/>
            <person name="Martinoia E."/>
            <person name="Murphy A."/>
            <person name="Rea P.A."/>
            <person name="Samuels L."/>
            <person name="Schulz B."/>
            <person name="Spalding E.J."/>
            <person name="Yazaki K."/>
            <person name="Theodoulou F.L."/>
        </authorList>
    </citation>
    <scope>GENE FAMILY</scope>
    <scope>NOMENCLATURE</scope>
</reference>